<comment type="function">
    <text evidence="1">Produces ATP from ADP in the presence of a proton gradient across the membrane. The alpha chain is a regulatory subunit.</text>
</comment>
<comment type="catalytic activity">
    <reaction evidence="1">
        <text>ATP + H2O + 4 H(+)(in) = ADP + phosphate + 5 H(+)(out)</text>
        <dbReference type="Rhea" id="RHEA:57720"/>
        <dbReference type="ChEBI" id="CHEBI:15377"/>
        <dbReference type="ChEBI" id="CHEBI:15378"/>
        <dbReference type="ChEBI" id="CHEBI:30616"/>
        <dbReference type="ChEBI" id="CHEBI:43474"/>
        <dbReference type="ChEBI" id="CHEBI:456216"/>
        <dbReference type="EC" id="7.1.2.2"/>
    </reaction>
</comment>
<comment type="subunit">
    <text evidence="1">F-type ATPases have 2 components, CF(1) - the catalytic core - and CF(0) - the membrane proton channel. CF(1) has five subunits: alpha(3), beta(3), gamma(1), delta(1), epsilon(1). CF(0) has three main subunits: a(1), b(2) and c(9-12). The alpha and beta chains form an alternating ring which encloses part of the gamma chain. CF(1) is attached to CF(0) by a central stalk formed by the gamma and epsilon chains, while a peripheral stalk is formed by the delta and b chains.</text>
</comment>
<comment type="subcellular location">
    <subcellularLocation>
        <location evidence="1">Cell inner membrane</location>
        <topology evidence="1">Peripheral membrane protein</topology>
    </subcellularLocation>
</comment>
<comment type="similarity">
    <text evidence="1">Belongs to the ATPase alpha/beta chains family.</text>
</comment>
<organism>
    <name type="scientific">Aeromonas hydrophila subsp. hydrophila (strain ATCC 7966 / DSM 30187 / BCRC 13018 / CCUG 14551 / JCM 1027 / KCTC 2358 / NCIMB 9240 / NCTC 8049)</name>
    <dbReference type="NCBI Taxonomy" id="380703"/>
    <lineage>
        <taxon>Bacteria</taxon>
        <taxon>Pseudomonadati</taxon>
        <taxon>Pseudomonadota</taxon>
        <taxon>Gammaproteobacteria</taxon>
        <taxon>Aeromonadales</taxon>
        <taxon>Aeromonadaceae</taxon>
        <taxon>Aeromonas</taxon>
    </lineage>
</organism>
<accession>A0KQY0</accession>
<name>ATPA_AERHH</name>
<protein>
    <recommendedName>
        <fullName evidence="1">ATP synthase subunit alpha</fullName>
        <ecNumber evidence="1">7.1.2.2</ecNumber>
    </recommendedName>
    <alternativeName>
        <fullName evidence="1">ATP synthase F1 sector subunit alpha</fullName>
    </alternativeName>
    <alternativeName>
        <fullName evidence="1">F-ATPase subunit alpha</fullName>
    </alternativeName>
</protein>
<keyword id="KW-0066">ATP synthesis</keyword>
<keyword id="KW-0067">ATP-binding</keyword>
<keyword id="KW-0997">Cell inner membrane</keyword>
<keyword id="KW-1003">Cell membrane</keyword>
<keyword id="KW-0139">CF(1)</keyword>
<keyword id="KW-0375">Hydrogen ion transport</keyword>
<keyword id="KW-0406">Ion transport</keyword>
<keyword id="KW-0472">Membrane</keyword>
<keyword id="KW-0547">Nucleotide-binding</keyword>
<keyword id="KW-1185">Reference proteome</keyword>
<keyword id="KW-1278">Translocase</keyword>
<keyword id="KW-0813">Transport</keyword>
<reference key="1">
    <citation type="journal article" date="2006" name="J. Bacteriol.">
        <title>Genome sequence of Aeromonas hydrophila ATCC 7966T: jack of all trades.</title>
        <authorList>
            <person name="Seshadri R."/>
            <person name="Joseph S.W."/>
            <person name="Chopra A.K."/>
            <person name="Sha J."/>
            <person name="Shaw J."/>
            <person name="Graf J."/>
            <person name="Haft D.H."/>
            <person name="Wu M."/>
            <person name="Ren Q."/>
            <person name="Rosovitz M.J."/>
            <person name="Madupu R."/>
            <person name="Tallon L."/>
            <person name="Kim M."/>
            <person name="Jin S."/>
            <person name="Vuong H."/>
            <person name="Stine O.C."/>
            <person name="Ali A."/>
            <person name="Horneman A.J."/>
            <person name="Heidelberg J.F."/>
        </authorList>
    </citation>
    <scope>NUCLEOTIDE SEQUENCE [LARGE SCALE GENOMIC DNA]</scope>
    <source>
        <strain>ATCC 7966 / DSM 30187 / BCRC 13018 / CCUG 14551 / JCM 1027 / KCTC 2358 / NCIMB 9240 / NCTC 8049</strain>
    </source>
</reference>
<evidence type="ECO:0000255" key="1">
    <source>
        <dbReference type="HAMAP-Rule" id="MF_01346"/>
    </source>
</evidence>
<proteinExistence type="inferred from homology"/>
<sequence>MQLNSTEIAELIKQRIAQFDIKSEARNEGTIVSVSDGIIRIHGLADAMQGEMIELPGNRYALALNLERDSVGAVIMGSYDGLSEGMKVKGTGRILEVPVGRGLLGRVLNTLGQPIDGKGPIDNDGFSPIEVIAPGVIERKSVDQPVQTGLKAIDAMIPIGRGQRELIIGDRQVGKTAIAIDTIINQKDSGIKCVYVAIGQKASTIANVVRKLEEHGALANTIVVVASASEAAALQYLAPYAGCSMGEYFRDRGEDALIIYDDLSKQAVAYRQISLLLRRPPGREAYPGDVFYLHSRLLERAARVNAEYVEKFTNGAVKGQTGSLTALPIIETQAGDVSAFVPTNVISITDGQIFLTSQLFNSGIRPAVDPGISVSRVGGAAQTKIVKKLSGGIRTALAQYRELAAFAQFSSDLDDATRKQLDHGQKVTELMKQKQYSPLSVAHQSLVLFAAEKGYLSDVELNKIVDFEAALLSYANTQHAELMAEINAKADYNDAIVGKLTALLDDFKATQTW</sequence>
<dbReference type="EC" id="7.1.2.2" evidence="1"/>
<dbReference type="EMBL" id="CP000462">
    <property type="protein sequence ID" value="ABK38212.1"/>
    <property type="molecule type" value="Genomic_DNA"/>
</dbReference>
<dbReference type="RefSeq" id="WP_011707910.1">
    <property type="nucleotide sequence ID" value="NC_008570.1"/>
</dbReference>
<dbReference type="RefSeq" id="YP_858681.1">
    <property type="nucleotide sequence ID" value="NC_008570.1"/>
</dbReference>
<dbReference type="SMR" id="A0KQY0"/>
<dbReference type="STRING" id="380703.AHA_4264"/>
<dbReference type="EnsemblBacteria" id="ABK38212">
    <property type="protein sequence ID" value="ABK38212"/>
    <property type="gene ID" value="AHA_4264"/>
</dbReference>
<dbReference type="GeneID" id="4487368"/>
<dbReference type="KEGG" id="aha:AHA_4264"/>
<dbReference type="PATRIC" id="fig|380703.7.peg.4214"/>
<dbReference type="eggNOG" id="COG0056">
    <property type="taxonomic scope" value="Bacteria"/>
</dbReference>
<dbReference type="HOGENOM" id="CLU_010091_2_1_6"/>
<dbReference type="OrthoDB" id="9803053at2"/>
<dbReference type="Proteomes" id="UP000000756">
    <property type="component" value="Chromosome"/>
</dbReference>
<dbReference type="GO" id="GO:0005886">
    <property type="term" value="C:plasma membrane"/>
    <property type="evidence" value="ECO:0007669"/>
    <property type="project" value="UniProtKB-SubCell"/>
</dbReference>
<dbReference type="GO" id="GO:0045259">
    <property type="term" value="C:proton-transporting ATP synthase complex"/>
    <property type="evidence" value="ECO:0007669"/>
    <property type="project" value="UniProtKB-KW"/>
</dbReference>
<dbReference type="GO" id="GO:0043531">
    <property type="term" value="F:ADP binding"/>
    <property type="evidence" value="ECO:0007669"/>
    <property type="project" value="TreeGrafter"/>
</dbReference>
<dbReference type="GO" id="GO:0005524">
    <property type="term" value="F:ATP binding"/>
    <property type="evidence" value="ECO:0007669"/>
    <property type="project" value="UniProtKB-UniRule"/>
</dbReference>
<dbReference type="GO" id="GO:0046933">
    <property type="term" value="F:proton-transporting ATP synthase activity, rotational mechanism"/>
    <property type="evidence" value="ECO:0007669"/>
    <property type="project" value="UniProtKB-UniRule"/>
</dbReference>
<dbReference type="CDD" id="cd18113">
    <property type="entry name" value="ATP-synt_F1_alpha_C"/>
    <property type="match status" value="1"/>
</dbReference>
<dbReference type="CDD" id="cd18116">
    <property type="entry name" value="ATP-synt_F1_alpha_N"/>
    <property type="match status" value="1"/>
</dbReference>
<dbReference type="CDD" id="cd01132">
    <property type="entry name" value="F1-ATPase_alpha_CD"/>
    <property type="match status" value="1"/>
</dbReference>
<dbReference type="FunFam" id="1.20.150.20:FF:000001">
    <property type="entry name" value="ATP synthase subunit alpha"/>
    <property type="match status" value="1"/>
</dbReference>
<dbReference type="FunFam" id="2.40.30.20:FF:000001">
    <property type="entry name" value="ATP synthase subunit alpha"/>
    <property type="match status" value="1"/>
</dbReference>
<dbReference type="FunFam" id="3.40.50.300:FF:000002">
    <property type="entry name" value="ATP synthase subunit alpha"/>
    <property type="match status" value="1"/>
</dbReference>
<dbReference type="Gene3D" id="2.40.30.20">
    <property type="match status" value="1"/>
</dbReference>
<dbReference type="Gene3D" id="1.20.150.20">
    <property type="entry name" value="ATP synthase alpha/beta chain, C-terminal domain"/>
    <property type="match status" value="1"/>
</dbReference>
<dbReference type="Gene3D" id="3.40.50.300">
    <property type="entry name" value="P-loop containing nucleotide triphosphate hydrolases"/>
    <property type="match status" value="1"/>
</dbReference>
<dbReference type="HAMAP" id="MF_01346">
    <property type="entry name" value="ATP_synth_alpha_bact"/>
    <property type="match status" value="1"/>
</dbReference>
<dbReference type="InterPro" id="IPR023366">
    <property type="entry name" value="ATP_synth_asu-like_sf"/>
</dbReference>
<dbReference type="InterPro" id="IPR000793">
    <property type="entry name" value="ATP_synth_asu_C"/>
</dbReference>
<dbReference type="InterPro" id="IPR038376">
    <property type="entry name" value="ATP_synth_asu_C_sf"/>
</dbReference>
<dbReference type="InterPro" id="IPR033732">
    <property type="entry name" value="ATP_synth_F1_a_nt-bd_dom"/>
</dbReference>
<dbReference type="InterPro" id="IPR005294">
    <property type="entry name" value="ATP_synth_F1_asu"/>
</dbReference>
<dbReference type="InterPro" id="IPR020003">
    <property type="entry name" value="ATPase_a/bsu_AS"/>
</dbReference>
<dbReference type="InterPro" id="IPR004100">
    <property type="entry name" value="ATPase_F1/V1/A1_a/bsu_N"/>
</dbReference>
<dbReference type="InterPro" id="IPR036121">
    <property type="entry name" value="ATPase_F1/V1/A1_a/bsu_N_sf"/>
</dbReference>
<dbReference type="InterPro" id="IPR000194">
    <property type="entry name" value="ATPase_F1/V1/A1_a/bsu_nucl-bd"/>
</dbReference>
<dbReference type="InterPro" id="IPR027417">
    <property type="entry name" value="P-loop_NTPase"/>
</dbReference>
<dbReference type="NCBIfam" id="TIGR00962">
    <property type="entry name" value="atpA"/>
    <property type="match status" value="1"/>
</dbReference>
<dbReference type="NCBIfam" id="NF009884">
    <property type="entry name" value="PRK13343.1"/>
    <property type="match status" value="1"/>
</dbReference>
<dbReference type="PANTHER" id="PTHR48082">
    <property type="entry name" value="ATP SYNTHASE SUBUNIT ALPHA, MITOCHONDRIAL"/>
    <property type="match status" value="1"/>
</dbReference>
<dbReference type="PANTHER" id="PTHR48082:SF2">
    <property type="entry name" value="ATP SYNTHASE SUBUNIT ALPHA, MITOCHONDRIAL"/>
    <property type="match status" value="1"/>
</dbReference>
<dbReference type="Pfam" id="PF00006">
    <property type="entry name" value="ATP-synt_ab"/>
    <property type="match status" value="1"/>
</dbReference>
<dbReference type="Pfam" id="PF00306">
    <property type="entry name" value="ATP-synt_ab_C"/>
    <property type="match status" value="1"/>
</dbReference>
<dbReference type="Pfam" id="PF02874">
    <property type="entry name" value="ATP-synt_ab_N"/>
    <property type="match status" value="1"/>
</dbReference>
<dbReference type="SUPFAM" id="SSF47917">
    <property type="entry name" value="C-terminal domain of alpha and beta subunits of F1 ATP synthase"/>
    <property type="match status" value="1"/>
</dbReference>
<dbReference type="SUPFAM" id="SSF50615">
    <property type="entry name" value="N-terminal domain of alpha and beta subunits of F1 ATP synthase"/>
    <property type="match status" value="1"/>
</dbReference>
<dbReference type="SUPFAM" id="SSF52540">
    <property type="entry name" value="P-loop containing nucleoside triphosphate hydrolases"/>
    <property type="match status" value="1"/>
</dbReference>
<dbReference type="PROSITE" id="PS00152">
    <property type="entry name" value="ATPASE_ALPHA_BETA"/>
    <property type="match status" value="1"/>
</dbReference>
<feature type="chain" id="PRO_0000339014" description="ATP synthase subunit alpha">
    <location>
        <begin position="1"/>
        <end position="513"/>
    </location>
</feature>
<feature type="binding site" evidence="1">
    <location>
        <begin position="169"/>
        <end position="176"/>
    </location>
    <ligand>
        <name>ATP</name>
        <dbReference type="ChEBI" id="CHEBI:30616"/>
    </ligand>
</feature>
<feature type="site" description="Required for activity" evidence="1">
    <location>
        <position position="373"/>
    </location>
</feature>
<gene>
    <name evidence="1" type="primary">atpA</name>
    <name type="ordered locus">AHA_4264</name>
</gene>